<proteinExistence type="inferred from homology"/>
<keyword id="KW-0067">ATP-binding</keyword>
<keyword id="KW-0133">Cell shape</keyword>
<keyword id="KW-0961">Cell wall biogenesis/degradation</keyword>
<keyword id="KW-0963">Cytoplasm</keyword>
<keyword id="KW-0436">Ligase</keyword>
<keyword id="KW-0460">Magnesium</keyword>
<keyword id="KW-0464">Manganese</keyword>
<keyword id="KW-0479">Metal-binding</keyword>
<keyword id="KW-0547">Nucleotide-binding</keyword>
<keyword id="KW-0573">Peptidoglycan synthesis</keyword>
<keyword id="KW-1185">Reference proteome</keyword>
<accession>A6WZQ9</accession>
<evidence type="ECO:0000250" key="1"/>
<evidence type="ECO:0000255" key="2">
    <source>
        <dbReference type="HAMAP-Rule" id="MF_00047"/>
    </source>
</evidence>
<protein>
    <recommendedName>
        <fullName evidence="2">D-alanine--D-alanine ligase</fullName>
        <ecNumber evidence="2">6.3.2.4</ecNumber>
    </recommendedName>
    <alternativeName>
        <fullName evidence="2">D-Ala-D-Ala ligase</fullName>
    </alternativeName>
    <alternativeName>
        <fullName evidence="2">D-alanylalanine synthetase</fullName>
    </alternativeName>
</protein>
<comment type="function">
    <text evidence="2">Cell wall formation.</text>
</comment>
<comment type="catalytic activity">
    <reaction evidence="2">
        <text>2 D-alanine + ATP = D-alanyl-D-alanine + ADP + phosphate + H(+)</text>
        <dbReference type="Rhea" id="RHEA:11224"/>
        <dbReference type="ChEBI" id="CHEBI:15378"/>
        <dbReference type="ChEBI" id="CHEBI:30616"/>
        <dbReference type="ChEBI" id="CHEBI:43474"/>
        <dbReference type="ChEBI" id="CHEBI:57416"/>
        <dbReference type="ChEBI" id="CHEBI:57822"/>
        <dbReference type="ChEBI" id="CHEBI:456216"/>
        <dbReference type="EC" id="6.3.2.4"/>
    </reaction>
</comment>
<comment type="cofactor">
    <cofactor evidence="1">
        <name>Mg(2+)</name>
        <dbReference type="ChEBI" id="CHEBI:18420"/>
    </cofactor>
    <cofactor evidence="1">
        <name>Mn(2+)</name>
        <dbReference type="ChEBI" id="CHEBI:29035"/>
    </cofactor>
    <text evidence="1">Binds 2 magnesium or manganese ions per subunit.</text>
</comment>
<comment type="pathway">
    <text evidence="2">Cell wall biogenesis; peptidoglycan biosynthesis.</text>
</comment>
<comment type="subcellular location">
    <subcellularLocation>
        <location evidence="2">Cytoplasm</location>
    </subcellularLocation>
</comment>
<comment type="similarity">
    <text evidence="2">Belongs to the D-alanine--D-alanine ligase family.</text>
</comment>
<reference key="1">
    <citation type="journal article" date="2011" name="J. Bacteriol.">
        <title>Genome of Ochrobactrum anthropi ATCC 49188 T, a versatile opportunistic pathogen and symbiont of several eukaryotic hosts.</title>
        <authorList>
            <person name="Chain P.S."/>
            <person name="Lang D.M."/>
            <person name="Comerci D.J."/>
            <person name="Malfatti S.A."/>
            <person name="Vergez L.M."/>
            <person name="Shin M."/>
            <person name="Ugalde R.A."/>
            <person name="Garcia E."/>
            <person name="Tolmasky M.E."/>
        </authorList>
    </citation>
    <scope>NUCLEOTIDE SEQUENCE [LARGE SCALE GENOMIC DNA]</scope>
    <source>
        <strain>ATCC 49188 / DSM 6882 / CCUG 24695 / JCM 21032 / LMG 3331 / NBRC 15819 / NCTC 12168 / Alc 37</strain>
    </source>
</reference>
<gene>
    <name evidence="2" type="primary">ddl</name>
    <name type="ordered locus">Oant_1747</name>
</gene>
<name>DDL_BRUA4</name>
<dbReference type="EC" id="6.3.2.4" evidence="2"/>
<dbReference type="EMBL" id="CP000758">
    <property type="protein sequence ID" value="ABS14463.1"/>
    <property type="molecule type" value="Genomic_DNA"/>
</dbReference>
<dbReference type="RefSeq" id="WP_012091751.1">
    <property type="nucleotide sequence ID" value="NC_009667.1"/>
</dbReference>
<dbReference type="SMR" id="A6WZQ9"/>
<dbReference type="STRING" id="439375.Oant_1747"/>
<dbReference type="KEGG" id="oan:Oant_1747"/>
<dbReference type="PATRIC" id="fig|439375.7.peg.1848"/>
<dbReference type="eggNOG" id="COG1181">
    <property type="taxonomic scope" value="Bacteria"/>
</dbReference>
<dbReference type="HOGENOM" id="CLU_039268_1_1_5"/>
<dbReference type="PhylomeDB" id="A6WZQ9"/>
<dbReference type="UniPathway" id="UPA00219"/>
<dbReference type="Proteomes" id="UP000002301">
    <property type="component" value="Chromosome 1"/>
</dbReference>
<dbReference type="GO" id="GO:0005737">
    <property type="term" value="C:cytoplasm"/>
    <property type="evidence" value="ECO:0007669"/>
    <property type="project" value="UniProtKB-SubCell"/>
</dbReference>
<dbReference type="GO" id="GO:0005524">
    <property type="term" value="F:ATP binding"/>
    <property type="evidence" value="ECO:0007669"/>
    <property type="project" value="UniProtKB-KW"/>
</dbReference>
<dbReference type="GO" id="GO:0008716">
    <property type="term" value="F:D-alanine-D-alanine ligase activity"/>
    <property type="evidence" value="ECO:0007669"/>
    <property type="project" value="UniProtKB-UniRule"/>
</dbReference>
<dbReference type="GO" id="GO:0046872">
    <property type="term" value="F:metal ion binding"/>
    <property type="evidence" value="ECO:0007669"/>
    <property type="project" value="UniProtKB-KW"/>
</dbReference>
<dbReference type="GO" id="GO:0071555">
    <property type="term" value="P:cell wall organization"/>
    <property type="evidence" value="ECO:0007669"/>
    <property type="project" value="UniProtKB-KW"/>
</dbReference>
<dbReference type="GO" id="GO:0009252">
    <property type="term" value="P:peptidoglycan biosynthetic process"/>
    <property type="evidence" value="ECO:0007669"/>
    <property type="project" value="UniProtKB-UniRule"/>
</dbReference>
<dbReference type="GO" id="GO:0008360">
    <property type="term" value="P:regulation of cell shape"/>
    <property type="evidence" value="ECO:0007669"/>
    <property type="project" value="UniProtKB-KW"/>
</dbReference>
<dbReference type="Gene3D" id="3.40.50.20">
    <property type="match status" value="1"/>
</dbReference>
<dbReference type="Gene3D" id="3.30.1490.20">
    <property type="entry name" value="ATP-grasp fold, A domain"/>
    <property type="match status" value="1"/>
</dbReference>
<dbReference type="Gene3D" id="3.30.470.20">
    <property type="entry name" value="ATP-grasp fold, B domain"/>
    <property type="match status" value="1"/>
</dbReference>
<dbReference type="HAMAP" id="MF_00047">
    <property type="entry name" value="Dala_Dala_lig"/>
    <property type="match status" value="1"/>
</dbReference>
<dbReference type="InterPro" id="IPR011761">
    <property type="entry name" value="ATP-grasp"/>
</dbReference>
<dbReference type="InterPro" id="IPR013815">
    <property type="entry name" value="ATP_grasp_subdomain_1"/>
</dbReference>
<dbReference type="InterPro" id="IPR000291">
    <property type="entry name" value="D-Ala_lig_Van_CS"/>
</dbReference>
<dbReference type="InterPro" id="IPR005905">
    <property type="entry name" value="D_ala_D_ala"/>
</dbReference>
<dbReference type="InterPro" id="IPR011095">
    <property type="entry name" value="Dala_Dala_lig_C"/>
</dbReference>
<dbReference type="InterPro" id="IPR011127">
    <property type="entry name" value="Dala_Dala_lig_N"/>
</dbReference>
<dbReference type="InterPro" id="IPR016185">
    <property type="entry name" value="PreATP-grasp_dom_sf"/>
</dbReference>
<dbReference type="NCBIfam" id="TIGR01205">
    <property type="entry name" value="D_ala_D_alaTIGR"/>
    <property type="match status" value="1"/>
</dbReference>
<dbReference type="NCBIfam" id="NF002378">
    <property type="entry name" value="PRK01372.1"/>
    <property type="match status" value="1"/>
</dbReference>
<dbReference type="PANTHER" id="PTHR23132">
    <property type="entry name" value="D-ALANINE--D-ALANINE LIGASE"/>
    <property type="match status" value="1"/>
</dbReference>
<dbReference type="PANTHER" id="PTHR23132:SF23">
    <property type="entry name" value="D-ALANINE--D-ALANINE LIGASE B"/>
    <property type="match status" value="1"/>
</dbReference>
<dbReference type="Pfam" id="PF07478">
    <property type="entry name" value="Dala_Dala_lig_C"/>
    <property type="match status" value="1"/>
</dbReference>
<dbReference type="Pfam" id="PF01820">
    <property type="entry name" value="Dala_Dala_lig_N"/>
    <property type="match status" value="1"/>
</dbReference>
<dbReference type="PIRSF" id="PIRSF039102">
    <property type="entry name" value="Ddl/VanB"/>
    <property type="match status" value="1"/>
</dbReference>
<dbReference type="SUPFAM" id="SSF56059">
    <property type="entry name" value="Glutathione synthetase ATP-binding domain-like"/>
    <property type="match status" value="1"/>
</dbReference>
<dbReference type="SUPFAM" id="SSF52440">
    <property type="entry name" value="PreATP-grasp domain"/>
    <property type="match status" value="1"/>
</dbReference>
<dbReference type="PROSITE" id="PS50975">
    <property type="entry name" value="ATP_GRASP"/>
    <property type="match status" value="1"/>
</dbReference>
<dbReference type="PROSITE" id="PS00843">
    <property type="entry name" value="DALA_DALA_LIGASE_1"/>
    <property type="match status" value="1"/>
</dbReference>
<dbReference type="PROSITE" id="PS00844">
    <property type="entry name" value="DALA_DALA_LIGASE_2"/>
    <property type="match status" value="1"/>
</dbReference>
<feature type="chain" id="PRO_1000030475" description="D-alanine--D-alanine ligase">
    <location>
        <begin position="1"/>
        <end position="308"/>
    </location>
</feature>
<feature type="domain" description="ATP-grasp" evidence="2">
    <location>
        <begin position="102"/>
        <end position="302"/>
    </location>
</feature>
<feature type="binding site" evidence="2">
    <location>
        <begin position="128"/>
        <end position="183"/>
    </location>
    <ligand>
        <name>ATP</name>
        <dbReference type="ChEBI" id="CHEBI:30616"/>
    </ligand>
</feature>
<feature type="binding site" evidence="2">
    <location>
        <position position="252"/>
    </location>
    <ligand>
        <name>Mg(2+)</name>
        <dbReference type="ChEBI" id="CHEBI:18420"/>
        <label>1</label>
    </ligand>
</feature>
<feature type="binding site" evidence="2">
    <location>
        <position position="269"/>
    </location>
    <ligand>
        <name>Mg(2+)</name>
        <dbReference type="ChEBI" id="CHEBI:18420"/>
        <label>1</label>
    </ligand>
</feature>
<feature type="binding site" evidence="2">
    <location>
        <position position="269"/>
    </location>
    <ligand>
        <name>Mg(2+)</name>
        <dbReference type="ChEBI" id="CHEBI:18420"/>
        <label>2</label>
    </ligand>
</feature>
<feature type="binding site" evidence="2">
    <location>
        <position position="271"/>
    </location>
    <ligand>
        <name>Mg(2+)</name>
        <dbReference type="ChEBI" id="CHEBI:18420"/>
        <label>2</label>
    </ligand>
</feature>
<organism>
    <name type="scientific">Brucella anthropi (strain ATCC 49188 / DSM 6882 / CCUG 24695 / JCM 21032 / LMG 3331 / NBRC 15819 / NCTC 12168 / Alc 37)</name>
    <name type="common">Ochrobactrum anthropi</name>
    <dbReference type="NCBI Taxonomy" id="439375"/>
    <lineage>
        <taxon>Bacteria</taxon>
        <taxon>Pseudomonadati</taxon>
        <taxon>Pseudomonadota</taxon>
        <taxon>Alphaproteobacteria</taxon>
        <taxon>Hyphomicrobiales</taxon>
        <taxon>Brucellaceae</taxon>
        <taxon>Brucella/Ochrobactrum group</taxon>
        <taxon>Brucella</taxon>
    </lineage>
</organism>
<sequence length="308" mass="33280">MTGKHVAVLMGGFSSERPVSLSSGTACAATLEERGYCVTRIDVDRNVASVLAELKPDVAFNALHGPFGEDGAIQGVLEYLQIPYTHSGVLASALAMDKDRAKKVAAAAGVAVASSLLLNRFEIGTEHPMEPPYVVKPVREGSSFGVVIVKEDQTHPPQIISSAEWNYGAEVLVEKYIPGRELTCAVMGDRVMDVCEIIPVGHQFYDYDSKYVAGASSHVCPAKILPNIYQKIQTMALTAHRAIGCRGVSRSDFRFDDRFSDDGEVIWLEINTQPGMTPTSLVPDIAKAAGISFGELLSWMVEDASCLR</sequence>